<sequence length="156" mass="17756">MSRKNRAPKRDVLPDPLYNSQLVTRLINRVMLDGKRGTAASIVYGAFEQIKEATGNDALEVFETAMENIMPVLEVRARRVGGSNYQVPVEVRPERRTTLGLRWLVTIARLRGEHTMQDRLAKEILDAANNTGAAVKKREDTHRMAEANRAFAHFRW</sequence>
<comment type="function">
    <text evidence="1">One of the primary rRNA binding proteins, it binds directly to 16S rRNA where it nucleates assembly of the head domain of the 30S subunit. Is located at the subunit interface close to the decoding center, probably blocks exit of the E-site tRNA.</text>
</comment>
<comment type="subunit">
    <text evidence="1">Part of the 30S ribosomal subunit. Contacts proteins S9 and S11.</text>
</comment>
<comment type="similarity">
    <text evidence="1">Belongs to the universal ribosomal protein uS7 family.</text>
</comment>
<dbReference type="EMBL" id="AE007317">
    <property type="protein sequence ID" value="AAK99053.1"/>
    <property type="molecule type" value="Genomic_DNA"/>
</dbReference>
<dbReference type="PIR" id="A97903">
    <property type="entry name" value="A97903"/>
</dbReference>
<dbReference type="RefSeq" id="NP_357843.1">
    <property type="nucleotide sequence ID" value="NC_003098.1"/>
</dbReference>
<dbReference type="RefSeq" id="WP_000087873.1">
    <property type="nucleotide sequence ID" value="NC_003098.1"/>
</dbReference>
<dbReference type="SMR" id="Q8CWU6"/>
<dbReference type="STRING" id="171101.spr0249"/>
<dbReference type="GeneID" id="93738576"/>
<dbReference type="KEGG" id="spr:spr0249"/>
<dbReference type="PATRIC" id="fig|171101.6.peg.284"/>
<dbReference type="eggNOG" id="COG0049">
    <property type="taxonomic scope" value="Bacteria"/>
</dbReference>
<dbReference type="HOGENOM" id="CLU_072226_1_1_9"/>
<dbReference type="PRO" id="PR:Q8CWU6"/>
<dbReference type="Proteomes" id="UP000000586">
    <property type="component" value="Chromosome"/>
</dbReference>
<dbReference type="GO" id="GO:0022627">
    <property type="term" value="C:cytosolic small ribosomal subunit"/>
    <property type="evidence" value="ECO:0000318"/>
    <property type="project" value="GO_Central"/>
</dbReference>
<dbReference type="GO" id="GO:0005840">
    <property type="term" value="C:ribosome"/>
    <property type="evidence" value="ECO:0000318"/>
    <property type="project" value="GO_Central"/>
</dbReference>
<dbReference type="GO" id="GO:0003729">
    <property type="term" value="F:mRNA binding"/>
    <property type="evidence" value="ECO:0000318"/>
    <property type="project" value="GO_Central"/>
</dbReference>
<dbReference type="GO" id="GO:0019843">
    <property type="term" value="F:rRNA binding"/>
    <property type="evidence" value="ECO:0000318"/>
    <property type="project" value="GO_Central"/>
</dbReference>
<dbReference type="GO" id="GO:0003735">
    <property type="term" value="F:structural constituent of ribosome"/>
    <property type="evidence" value="ECO:0000318"/>
    <property type="project" value="GO_Central"/>
</dbReference>
<dbReference type="GO" id="GO:0000049">
    <property type="term" value="F:tRNA binding"/>
    <property type="evidence" value="ECO:0007669"/>
    <property type="project" value="UniProtKB-UniRule"/>
</dbReference>
<dbReference type="GO" id="GO:0000028">
    <property type="term" value="P:ribosomal small subunit assembly"/>
    <property type="evidence" value="ECO:0000318"/>
    <property type="project" value="GO_Central"/>
</dbReference>
<dbReference type="GO" id="GO:0006412">
    <property type="term" value="P:translation"/>
    <property type="evidence" value="ECO:0000318"/>
    <property type="project" value="GO_Central"/>
</dbReference>
<dbReference type="CDD" id="cd14869">
    <property type="entry name" value="uS7_Bacteria"/>
    <property type="match status" value="1"/>
</dbReference>
<dbReference type="FunFam" id="1.10.455.10:FF:000001">
    <property type="entry name" value="30S ribosomal protein S7"/>
    <property type="match status" value="1"/>
</dbReference>
<dbReference type="Gene3D" id="1.10.455.10">
    <property type="entry name" value="Ribosomal protein S7 domain"/>
    <property type="match status" value="1"/>
</dbReference>
<dbReference type="HAMAP" id="MF_00480_B">
    <property type="entry name" value="Ribosomal_uS7_B"/>
    <property type="match status" value="1"/>
</dbReference>
<dbReference type="InterPro" id="IPR000235">
    <property type="entry name" value="Ribosomal_uS7"/>
</dbReference>
<dbReference type="InterPro" id="IPR005717">
    <property type="entry name" value="Ribosomal_uS7_bac/org-type"/>
</dbReference>
<dbReference type="InterPro" id="IPR020606">
    <property type="entry name" value="Ribosomal_uS7_CS"/>
</dbReference>
<dbReference type="InterPro" id="IPR023798">
    <property type="entry name" value="Ribosomal_uS7_dom"/>
</dbReference>
<dbReference type="InterPro" id="IPR036823">
    <property type="entry name" value="Ribosomal_uS7_dom_sf"/>
</dbReference>
<dbReference type="NCBIfam" id="TIGR01029">
    <property type="entry name" value="rpsG_bact"/>
    <property type="match status" value="1"/>
</dbReference>
<dbReference type="PANTHER" id="PTHR11205">
    <property type="entry name" value="RIBOSOMAL PROTEIN S7"/>
    <property type="match status" value="1"/>
</dbReference>
<dbReference type="Pfam" id="PF00177">
    <property type="entry name" value="Ribosomal_S7"/>
    <property type="match status" value="1"/>
</dbReference>
<dbReference type="PIRSF" id="PIRSF002122">
    <property type="entry name" value="RPS7p_RPS7a_RPS5e_RPS7o"/>
    <property type="match status" value="1"/>
</dbReference>
<dbReference type="SUPFAM" id="SSF47973">
    <property type="entry name" value="Ribosomal protein S7"/>
    <property type="match status" value="1"/>
</dbReference>
<dbReference type="PROSITE" id="PS00052">
    <property type="entry name" value="RIBOSOMAL_S7"/>
    <property type="match status" value="1"/>
</dbReference>
<gene>
    <name evidence="1" type="primary">rpsG</name>
    <name type="ordered locus">spr0249</name>
</gene>
<feature type="chain" id="PRO_0000124356" description="Small ribosomal subunit protein uS7">
    <location>
        <begin position="1"/>
        <end position="156"/>
    </location>
</feature>
<accession>Q8CWU6</accession>
<evidence type="ECO:0000255" key="1">
    <source>
        <dbReference type="HAMAP-Rule" id="MF_00480"/>
    </source>
</evidence>
<evidence type="ECO:0000305" key="2"/>
<reference key="1">
    <citation type="journal article" date="2001" name="J. Bacteriol.">
        <title>Genome of the bacterium Streptococcus pneumoniae strain R6.</title>
        <authorList>
            <person name="Hoskins J."/>
            <person name="Alborn W.E. Jr."/>
            <person name="Arnold J."/>
            <person name="Blaszczak L.C."/>
            <person name="Burgett S."/>
            <person name="DeHoff B.S."/>
            <person name="Estrem S.T."/>
            <person name="Fritz L."/>
            <person name="Fu D.-J."/>
            <person name="Fuller W."/>
            <person name="Geringer C."/>
            <person name="Gilmour R."/>
            <person name="Glass J.S."/>
            <person name="Khoja H."/>
            <person name="Kraft A.R."/>
            <person name="Lagace R.E."/>
            <person name="LeBlanc D.J."/>
            <person name="Lee L.N."/>
            <person name="Lefkowitz E.J."/>
            <person name="Lu J."/>
            <person name="Matsushima P."/>
            <person name="McAhren S.M."/>
            <person name="McHenney M."/>
            <person name="McLeaster K."/>
            <person name="Mundy C.W."/>
            <person name="Nicas T.I."/>
            <person name="Norris F.H."/>
            <person name="O'Gara M."/>
            <person name="Peery R.B."/>
            <person name="Robertson G.T."/>
            <person name="Rockey P."/>
            <person name="Sun P.-M."/>
            <person name="Winkler M.E."/>
            <person name="Yang Y."/>
            <person name="Young-Bellido M."/>
            <person name="Zhao G."/>
            <person name="Zook C.A."/>
            <person name="Baltz R.H."/>
            <person name="Jaskunas S.R."/>
            <person name="Rosteck P.R. Jr."/>
            <person name="Skatrud P.L."/>
            <person name="Glass J.I."/>
        </authorList>
    </citation>
    <scope>NUCLEOTIDE SEQUENCE [LARGE SCALE GENOMIC DNA]</scope>
    <source>
        <strain>ATCC BAA-255 / R6</strain>
    </source>
</reference>
<name>RS7_STRR6</name>
<keyword id="KW-1185">Reference proteome</keyword>
<keyword id="KW-0687">Ribonucleoprotein</keyword>
<keyword id="KW-0689">Ribosomal protein</keyword>
<keyword id="KW-0694">RNA-binding</keyword>
<keyword id="KW-0699">rRNA-binding</keyword>
<keyword id="KW-0820">tRNA-binding</keyword>
<proteinExistence type="inferred from homology"/>
<protein>
    <recommendedName>
        <fullName evidence="1">Small ribosomal subunit protein uS7</fullName>
    </recommendedName>
    <alternativeName>
        <fullName evidence="2">30S ribosomal protein S7</fullName>
    </alternativeName>
</protein>
<organism>
    <name type="scientific">Streptococcus pneumoniae (strain ATCC BAA-255 / R6)</name>
    <dbReference type="NCBI Taxonomy" id="171101"/>
    <lineage>
        <taxon>Bacteria</taxon>
        <taxon>Bacillati</taxon>
        <taxon>Bacillota</taxon>
        <taxon>Bacilli</taxon>
        <taxon>Lactobacillales</taxon>
        <taxon>Streptococcaceae</taxon>
        <taxon>Streptococcus</taxon>
    </lineage>
</organism>